<protein>
    <recommendedName>
        <fullName evidence="1">Small ribosomal subunit protein uS14B</fullName>
    </recommendedName>
    <alternativeName>
        <fullName>30S ribosomal protein S14 type Z</fullName>
    </alternativeName>
</protein>
<sequence length="61" mass="7190">MAKKSMIAKQKRTPKYNVQAYTRCERCGRPHSVLRKFKLCRICFRELAYKGQIPGVKKASW</sequence>
<gene>
    <name evidence="1" type="primary">rpsZ</name>
    <name evidence="1" type="synonym">rpsN</name>
    <name type="ordered locus">ABC0163</name>
</gene>
<reference key="1">
    <citation type="submission" date="2003-10" db="EMBL/GenBank/DDBJ databases">
        <title>The complete genome sequence of the alkaliphilic Bacillus clausii KSM-K16.</title>
        <authorList>
            <person name="Takaki Y."/>
            <person name="Kageyama Y."/>
            <person name="Shimamura S."/>
            <person name="Suzuki H."/>
            <person name="Nishi S."/>
            <person name="Hatada Y."/>
            <person name="Kawai S."/>
            <person name="Ito S."/>
            <person name="Horikoshi K."/>
        </authorList>
    </citation>
    <scope>NUCLEOTIDE SEQUENCE [LARGE SCALE GENOMIC DNA]</scope>
    <source>
        <strain>KSM-K16</strain>
    </source>
</reference>
<feature type="chain" id="PRO_0000269081" description="Small ribosomal subunit protein uS14B">
    <location>
        <begin position="1"/>
        <end position="61"/>
    </location>
</feature>
<feature type="binding site" evidence="1">
    <location>
        <position position="24"/>
    </location>
    <ligand>
        <name>Zn(2+)</name>
        <dbReference type="ChEBI" id="CHEBI:29105"/>
    </ligand>
</feature>
<feature type="binding site" evidence="1">
    <location>
        <position position="27"/>
    </location>
    <ligand>
        <name>Zn(2+)</name>
        <dbReference type="ChEBI" id="CHEBI:29105"/>
    </ligand>
</feature>
<feature type="binding site" evidence="1">
    <location>
        <position position="40"/>
    </location>
    <ligand>
        <name>Zn(2+)</name>
        <dbReference type="ChEBI" id="CHEBI:29105"/>
    </ligand>
</feature>
<feature type="binding site" evidence="1">
    <location>
        <position position="43"/>
    </location>
    <ligand>
        <name>Zn(2+)</name>
        <dbReference type="ChEBI" id="CHEBI:29105"/>
    </ligand>
</feature>
<proteinExistence type="inferred from homology"/>
<organism>
    <name type="scientific">Shouchella clausii (strain KSM-K16)</name>
    <name type="common">Alkalihalobacillus clausii</name>
    <dbReference type="NCBI Taxonomy" id="66692"/>
    <lineage>
        <taxon>Bacteria</taxon>
        <taxon>Bacillati</taxon>
        <taxon>Bacillota</taxon>
        <taxon>Bacilli</taxon>
        <taxon>Bacillales</taxon>
        <taxon>Bacillaceae</taxon>
        <taxon>Shouchella</taxon>
    </lineage>
</organism>
<dbReference type="EMBL" id="AP006627">
    <property type="protein sequence ID" value="BAD62706.1"/>
    <property type="molecule type" value="Genomic_DNA"/>
</dbReference>
<dbReference type="RefSeq" id="WP_011245027.1">
    <property type="nucleotide sequence ID" value="NC_006582.1"/>
</dbReference>
<dbReference type="SMR" id="Q5WLP9"/>
<dbReference type="STRING" id="66692.ABC0163"/>
<dbReference type="KEGG" id="bcl:ABC0163"/>
<dbReference type="eggNOG" id="COG0199">
    <property type="taxonomic scope" value="Bacteria"/>
</dbReference>
<dbReference type="HOGENOM" id="CLU_139869_3_0_9"/>
<dbReference type="OrthoDB" id="9810484at2"/>
<dbReference type="Proteomes" id="UP000001168">
    <property type="component" value="Chromosome"/>
</dbReference>
<dbReference type="GO" id="GO:0015935">
    <property type="term" value="C:small ribosomal subunit"/>
    <property type="evidence" value="ECO:0007669"/>
    <property type="project" value="TreeGrafter"/>
</dbReference>
<dbReference type="GO" id="GO:0019843">
    <property type="term" value="F:rRNA binding"/>
    <property type="evidence" value="ECO:0007669"/>
    <property type="project" value="UniProtKB-UniRule"/>
</dbReference>
<dbReference type="GO" id="GO:0003735">
    <property type="term" value="F:structural constituent of ribosome"/>
    <property type="evidence" value="ECO:0007669"/>
    <property type="project" value="InterPro"/>
</dbReference>
<dbReference type="GO" id="GO:0008270">
    <property type="term" value="F:zinc ion binding"/>
    <property type="evidence" value="ECO:0007669"/>
    <property type="project" value="UniProtKB-UniRule"/>
</dbReference>
<dbReference type="GO" id="GO:0006412">
    <property type="term" value="P:translation"/>
    <property type="evidence" value="ECO:0007669"/>
    <property type="project" value="UniProtKB-UniRule"/>
</dbReference>
<dbReference type="FunFam" id="4.10.830.10:FF:000001">
    <property type="entry name" value="30S ribosomal protein S14 type Z"/>
    <property type="match status" value="1"/>
</dbReference>
<dbReference type="Gene3D" id="4.10.830.10">
    <property type="entry name" value="30s Ribosomal Protein S14, Chain N"/>
    <property type="match status" value="1"/>
</dbReference>
<dbReference type="HAMAP" id="MF_01364_B">
    <property type="entry name" value="Ribosomal_uS14_2_B"/>
    <property type="match status" value="1"/>
</dbReference>
<dbReference type="InterPro" id="IPR001209">
    <property type="entry name" value="Ribosomal_uS14"/>
</dbReference>
<dbReference type="InterPro" id="IPR023053">
    <property type="entry name" value="Ribosomal_uS14_bact"/>
</dbReference>
<dbReference type="InterPro" id="IPR018271">
    <property type="entry name" value="Ribosomal_uS14_CS"/>
</dbReference>
<dbReference type="InterPro" id="IPR043140">
    <property type="entry name" value="Ribosomal_uS14_sf"/>
</dbReference>
<dbReference type="NCBIfam" id="NF005974">
    <property type="entry name" value="PRK08061.1"/>
    <property type="match status" value="1"/>
</dbReference>
<dbReference type="PANTHER" id="PTHR19836">
    <property type="entry name" value="30S RIBOSOMAL PROTEIN S14"/>
    <property type="match status" value="1"/>
</dbReference>
<dbReference type="PANTHER" id="PTHR19836:SF26">
    <property type="entry name" value="SMALL RIBOSOMAL SUBUNIT PROTEIN US14B"/>
    <property type="match status" value="1"/>
</dbReference>
<dbReference type="Pfam" id="PF00253">
    <property type="entry name" value="Ribosomal_S14"/>
    <property type="match status" value="1"/>
</dbReference>
<dbReference type="SUPFAM" id="SSF57716">
    <property type="entry name" value="Glucocorticoid receptor-like (DNA-binding domain)"/>
    <property type="match status" value="1"/>
</dbReference>
<dbReference type="PROSITE" id="PS00527">
    <property type="entry name" value="RIBOSOMAL_S14"/>
    <property type="match status" value="1"/>
</dbReference>
<accession>Q5WLP9</accession>
<comment type="function">
    <text evidence="1">Binds 16S rRNA, required for the assembly of 30S particles and may also be responsible for determining the conformation of the 16S rRNA at the A site.</text>
</comment>
<comment type="cofactor">
    <cofactor evidence="1">
        <name>Zn(2+)</name>
        <dbReference type="ChEBI" id="CHEBI:29105"/>
    </cofactor>
    <text evidence="1">Binds 1 zinc ion per subunit.</text>
</comment>
<comment type="subunit">
    <text evidence="1">Part of the 30S ribosomal subunit. Contacts proteins S3 and S10.</text>
</comment>
<comment type="similarity">
    <text evidence="1">Belongs to the universal ribosomal protein uS14 family. Zinc-binding uS14 subfamily.</text>
</comment>
<evidence type="ECO:0000255" key="1">
    <source>
        <dbReference type="HAMAP-Rule" id="MF_01364"/>
    </source>
</evidence>
<name>RS14Z_SHOC1</name>
<keyword id="KW-0479">Metal-binding</keyword>
<keyword id="KW-1185">Reference proteome</keyword>
<keyword id="KW-0687">Ribonucleoprotein</keyword>
<keyword id="KW-0689">Ribosomal protein</keyword>
<keyword id="KW-0694">RNA-binding</keyword>
<keyword id="KW-0699">rRNA-binding</keyword>
<keyword id="KW-0862">Zinc</keyword>